<evidence type="ECO:0000255" key="1"/>
<evidence type="ECO:0000256" key="2">
    <source>
        <dbReference type="SAM" id="MobiDB-lite"/>
    </source>
</evidence>
<evidence type="ECO:0000305" key="3"/>
<comment type="subcellular location">
    <subcellularLocation>
        <location evidence="3">Membrane</location>
        <topology evidence="3">Multi-pass membrane protein</topology>
    </subcellularLocation>
</comment>
<dbReference type="EMBL" id="AAFI02000097">
    <property type="status" value="NOT_ANNOTATED_CDS"/>
    <property type="molecule type" value="Genomic_DNA"/>
</dbReference>
<dbReference type="EMBL" id="AAFI02000098">
    <property type="status" value="NOT_ANNOTATED_CDS"/>
    <property type="molecule type" value="Genomic_DNA"/>
</dbReference>
<dbReference type="FunCoup" id="P0CD64">
    <property type="interactions" value="5"/>
</dbReference>
<dbReference type="dictyBase" id="DDB_G0287209"/>
<dbReference type="VEuPathDB" id="AmoebaDB:DDB_G0286981"/>
<dbReference type="VEuPathDB" id="AmoebaDB:DDB_G0287123"/>
<dbReference type="InParanoid" id="P0CD64"/>
<dbReference type="PhylomeDB" id="P0CD64"/>
<dbReference type="PRO" id="PR:P0CD64"/>
<dbReference type="Proteomes" id="UP000002195">
    <property type="component" value="Chromosome 4"/>
</dbReference>
<dbReference type="GO" id="GO:0016020">
    <property type="term" value="C:membrane"/>
    <property type="evidence" value="ECO:0007669"/>
    <property type="project" value="UniProtKB-SubCell"/>
</dbReference>
<dbReference type="InterPro" id="IPR011050">
    <property type="entry name" value="Pectin_lyase_fold/virulence"/>
</dbReference>
<dbReference type="PANTHER" id="PTHR32158">
    <property type="entry name" value="RING-TYPE DOMAIN-CONTAINING PROTEIN"/>
    <property type="match status" value="1"/>
</dbReference>
<dbReference type="PANTHER" id="PTHR32158:SF22">
    <property type="entry name" value="TRANSMEMBRANE DOMAIN-CONTAINING PROTEIN DDB_G0287209"/>
    <property type="match status" value="1"/>
</dbReference>
<dbReference type="SUPFAM" id="SSF51126">
    <property type="entry name" value="Pectin lyase-like"/>
    <property type="match status" value="1"/>
</dbReference>
<reference key="1">
    <citation type="journal article" date="2005" name="Nature">
        <title>The genome of the social amoeba Dictyostelium discoideum.</title>
        <authorList>
            <person name="Eichinger L."/>
            <person name="Pachebat J.A."/>
            <person name="Gloeckner G."/>
            <person name="Rajandream M.A."/>
            <person name="Sucgang R."/>
            <person name="Berriman M."/>
            <person name="Song J."/>
            <person name="Olsen R."/>
            <person name="Szafranski K."/>
            <person name="Xu Q."/>
            <person name="Tunggal B."/>
            <person name="Kummerfeld S."/>
            <person name="Madera M."/>
            <person name="Konfortov B.A."/>
            <person name="Rivero F."/>
            <person name="Bankier A.T."/>
            <person name="Lehmann R."/>
            <person name="Hamlin N."/>
            <person name="Davies R."/>
            <person name="Gaudet P."/>
            <person name="Fey P."/>
            <person name="Pilcher K."/>
            <person name="Chen G."/>
            <person name="Saunders D."/>
            <person name="Sodergren E.J."/>
            <person name="Davis P."/>
            <person name="Kerhornou A."/>
            <person name="Nie X."/>
            <person name="Hall N."/>
            <person name="Anjard C."/>
            <person name="Hemphill L."/>
            <person name="Bason N."/>
            <person name="Farbrother P."/>
            <person name="Desany B."/>
            <person name="Just E."/>
            <person name="Morio T."/>
            <person name="Rost R."/>
            <person name="Churcher C.M."/>
            <person name="Cooper J."/>
            <person name="Haydock S."/>
            <person name="van Driessche N."/>
            <person name="Cronin A."/>
            <person name="Goodhead I."/>
            <person name="Muzny D.M."/>
            <person name="Mourier T."/>
            <person name="Pain A."/>
            <person name="Lu M."/>
            <person name="Harper D."/>
            <person name="Lindsay R."/>
            <person name="Hauser H."/>
            <person name="James K.D."/>
            <person name="Quiles M."/>
            <person name="Madan Babu M."/>
            <person name="Saito T."/>
            <person name="Buchrieser C."/>
            <person name="Wardroper A."/>
            <person name="Felder M."/>
            <person name="Thangavelu M."/>
            <person name="Johnson D."/>
            <person name="Knights A."/>
            <person name="Loulseged H."/>
            <person name="Mungall K.L."/>
            <person name="Oliver K."/>
            <person name="Price C."/>
            <person name="Quail M.A."/>
            <person name="Urushihara H."/>
            <person name="Hernandez J."/>
            <person name="Rabbinowitsch E."/>
            <person name="Steffen D."/>
            <person name="Sanders M."/>
            <person name="Ma J."/>
            <person name="Kohara Y."/>
            <person name="Sharp S."/>
            <person name="Simmonds M.N."/>
            <person name="Spiegler S."/>
            <person name="Tivey A."/>
            <person name="Sugano S."/>
            <person name="White B."/>
            <person name="Walker D."/>
            <person name="Woodward J.R."/>
            <person name="Winckler T."/>
            <person name="Tanaka Y."/>
            <person name="Shaulsky G."/>
            <person name="Schleicher M."/>
            <person name="Weinstock G.M."/>
            <person name="Rosenthal A."/>
            <person name="Cox E.C."/>
            <person name="Chisholm R.L."/>
            <person name="Gibbs R.A."/>
            <person name="Loomis W.F."/>
            <person name="Platzer M."/>
            <person name="Kay R.R."/>
            <person name="Williams J.G."/>
            <person name="Dear P.H."/>
            <person name="Noegel A.A."/>
            <person name="Barrell B.G."/>
            <person name="Kuspa A."/>
        </authorList>
    </citation>
    <scope>NUCLEOTIDE SEQUENCE [LARGE SCALE GENOMIC DNA]</scope>
    <source>
        <strain>AX4</strain>
    </source>
</reference>
<proteinExistence type="predicted"/>
<protein>
    <recommendedName>
        <fullName>Transmembrane domain-containing protein DDB_G0287209</fullName>
    </recommendedName>
</protein>
<accession>P0CD64</accession>
<organism>
    <name type="scientific">Dictyostelium discoideum</name>
    <name type="common">Social amoeba</name>
    <dbReference type="NCBI Taxonomy" id="44689"/>
    <lineage>
        <taxon>Eukaryota</taxon>
        <taxon>Amoebozoa</taxon>
        <taxon>Evosea</taxon>
        <taxon>Eumycetozoa</taxon>
        <taxon>Dictyostelia</taxon>
        <taxon>Dictyosteliales</taxon>
        <taxon>Dictyosteliaceae</taxon>
        <taxon>Dictyostelium</taxon>
    </lineage>
</organism>
<gene>
    <name type="ORF">DDB_G0287209</name>
</gene>
<feature type="chain" id="PRO_0000391337" description="Transmembrane domain-containing protein DDB_G0287209">
    <location>
        <begin position="1"/>
        <end position="1650"/>
    </location>
</feature>
<feature type="transmembrane region" description="Helical" evidence="1">
    <location>
        <begin position="1314"/>
        <end position="1334"/>
    </location>
</feature>
<feature type="transmembrane region" description="Helical" evidence="1">
    <location>
        <begin position="1347"/>
        <end position="1369"/>
    </location>
</feature>
<feature type="transmembrane region" description="Helical" evidence="1">
    <location>
        <begin position="1390"/>
        <end position="1410"/>
    </location>
</feature>
<feature type="transmembrane region" description="Helical" evidence="1">
    <location>
        <begin position="1454"/>
        <end position="1474"/>
    </location>
</feature>
<feature type="transmembrane region" description="Helical" evidence="1">
    <location>
        <begin position="1489"/>
        <end position="1509"/>
    </location>
</feature>
<feature type="transmembrane region" description="Helical" evidence="1">
    <location>
        <begin position="1515"/>
        <end position="1535"/>
    </location>
</feature>
<feature type="transmembrane region" description="Helical" evidence="1">
    <location>
        <begin position="1539"/>
        <end position="1559"/>
    </location>
</feature>
<feature type="transmembrane region" description="Helical" evidence="1">
    <location>
        <begin position="1570"/>
        <end position="1590"/>
    </location>
</feature>
<feature type="transmembrane region" description="Helical" evidence="1">
    <location>
        <begin position="1595"/>
        <end position="1615"/>
    </location>
</feature>
<feature type="region of interest" description="Disordered" evidence="2">
    <location>
        <begin position="197"/>
        <end position="216"/>
    </location>
</feature>
<feature type="region of interest" description="Disordered" evidence="2">
    <location>
        <begin position="1218"/>
        <end position="1296"/>
    </location>
</feature>
<feature type="coiled-coil region" evidence="1">
    <location>
        <begin position="194"/>
        <end position="225"/>
    </location>
</feature>
<feature type="compositionally biased region" description="Low complexity" evidence="2">
    <location>
        <begin position="1224"/>
        <end position="1284"/>
    </location>
</feature>
<name>Y6997_DICDI</name>
<sequence>MIDIIDYNFNNHIKNDNSKFNNILKKYQINNNTFENGAILDLNDIGSNILYKNEDKEKDEEEYYYYKENQNIYNKIGNDLNYNFQYNEYIENNDFENNQPIDNFNVEGSGGGKQIISYYLSKNGNDTTGNGTINSPYLSICKIVNIINSYNGINIFKVFIEIGNYEAVEGCTLNIINNSVVSLIYFTKNEIINNNNNNNFNNNNNNNNNNNNNKNNYNNNKSNLIIPNIINLNINLKNSTFFLNYINLHYFNEKVINITYGINTFQFLIENSNLHCVNPKLPYCNILFNKLNQSLIINDDNEAMILIKNSNIIKFDFYFNIIEMNVENSNLYFTSLYSLISQNLTFSKSYFNNTLIYLVEYQAINVSIDHCKMIYDFSNNIQVFLMGTGNILTISNSQMESTGEFFSSYITCKNAKVQLMNVQFINWYLLRPFINLSLNSTLIMENVFARKMYIPAFIEIGNSELIIDTLEISGNKLVLIIIEGPSVISISYLTLKYQSEQGSPIMMNFPGGGFGMKTIINITSSNFINIDGFTLKDAQLTLFNVSMHSDSINSLFALSSSQLFSSKSTFSSSLIVGSYFLFSLDFTSLVDLDRCILTNSSSLFQANSFSNITITNSLIDSVFSRSVAIEIQGGSSFTMINSIINKTYVVSQSFIYSSSNSDIIIHKCNFLQFVMGLKPLGNFLNSNVFIDHLLLYQSFFQNQIFVATSSIMYISDTKLFNNSIYGSEMFLLNNQSYLLMNNSLIYGNSISVCFSSSHSLANIHNVTFQNNSGIFLYSVDSKISLSLLEFSKNPISSLYYLFYFTNSSATFQQLTIDSNYFMGSVIEAHFSEILFTNLIFSLNQNVDNLLKDRESPSLVFTHSNVKIINSTINSNSQWSLDLIWSQKSILIIKNSLFNSNSIPYNGYLIRLETCHLSLDHCLIFGTQSIEGTIGSFNSIINATNNLFLQNNALEMGGCFFLSNSQILSFSNNSFLNNTASIGAAIFTNGTLINNTLIIKSNKFLNNNAYEYGDNIGSYPTWISVEYPEDFDSTINYIRLYDNYSNLVADNFYTANIIIYDSRVNENISLTTFIRGGSGDFNYSFNVFSIYDFQISINIIADGFNINYLKYKSPPKCLNFQTSTLSDGCIFCPINQAATPEKGECTKCDTNKLVCLNNDVHTLQDYFMINNDVSKVYQCPFGLCSGQNNCNSNLFLLSSLQSPLCSRCLNDYNNENDDENQFKYNNNENSGSSGNSNNNENSNSNSDSNSNSNSNSNSNSNSNSNSNSNSNSNSNSNSNENNYNGGDDDDDEKNINNYKPSKSKNGLYCCNKFQPLLLIPFIFWILFFGLFLSLFKNVITGTMIGQIILFLQLNSIVFYPLPNIYGLQLFRMSIDYFDRYCLFKLDYIEKISISLISIFLIYLIGISDVTSRLILSILKRSLKLKKLIPLVIEKQLRKFEYYKMNRINTRLKSNWNIYLMLIQPLFHCLISLIVPKSIGSTTYLSIDLTILFISTPIQIVFFFSSIVILFLLEFRWWDLIFVFKTILFTSLSVTLLYNPPVYFSALVICQIVYSYSQFAFSPQRKDHMYRVENLLNLFQLSILIVINTSIIRNLSFNLIGILFTIVIFSCSLITIIYKLFFYKKLKTIKNHRLLNLIINVDDNKKKTNKNK</sequence>
<keyword id="KW-0175">Coiled coil</keyword>
<keyword id="KW-0472">Membrane</keyword>
<keyword id="KW-1185">Reference proteome</keyword>
<keyword id="KW-0812">Transmembrane</keyword>
<keyword id="KW-1133">Transmembrane helix</keyword>